<proteinExistence type="evidence at protein level"/>
<gene>
    <name type="ordered locus">SAUSA300_2319</name>
</gene>
<accession>Q2FEC4</accession>
<dbReference type="EC" id="1.18.1.2" evidence="1"/>
<dbReference type="EMBL" id="CP000255">
    <property type="protein sequence ID" value="ABD21289.1"/>
    <property type="molecule type" value="Genomic_DNA"/>
</dbReference>
<dbReference type="RefSeq" id="WP_000655971.1">
    <property type="nucleotide sequence ID" value="NZ_CP027476.1"/>
</dbReference>
<dbReference type="PDB" id="5TWB">
    <property type="method" value="X-ray"/>
    <property type="resolution" value="1.82 A"/>
    <property type="chains" value="A=1-344"/>
</dbReference>
<dbReference type="PDB" id="5TWC">
    <property type="method" value="X-ray"/>
    <property type="resolution" value="2.31 A"/>
    <property type="chains" value="A=1-344"/>
</dbReference>
<dbReference type="PDBsum" id="5TWB"/>
<dbReference type="PDBsum" id="5TWC"/>
<dbReference type="SMR" id="Q2FEC4"/>
<dbReference type="KEGG" id="saa:SAUSA300_2319"/>
<dbReference type="HOGENOM" id="CLU_031864_5_5_9"/>
<dbReference type="OMA" id="LEQCAPF"/>
<dbReference type="Proteomes" id="UP000001939">
    <property type="component" value="Chromosome"/>
</dbReference>
<dbReference type="GO" id="GO:0004324">
    <property type="term" value="F:ferredoxin-NADP+ reductase activity"/>
    <property type="evidence" value="ECO:0007669"/>
    <property type="project" value="UniProtKB-UniRule"/>
</dbReference>
<dbReference type="GO" id="GO:0050660">
    <property type="term" value="F:flavin adenine dinucleotide binding"/>
    <property type="evidence" value="ECO:0007669"/>
    <property type="project" value="UniProtKB-UniRule"/>
</dbReference>
<dbReference type="GO" id="GO:0050661">
    <property type="term" value="F:NADP binding"/>
    <property type="evidence" value="ECO:0007669"/>
    <property type="project" value="UniProtKB-UniRule"/>
</dbReference>
<dbReference type="Gene3D" id="3.50.50.60">
    <property type="entry name" value="FAD/NAD(P)-binding domain"/>
    <property type="match status" value="2"/>
</dbReference>
<dbReference type="HAMAP" id="MF_01685">
    <property type="entry name" value="FENR2"/>
    <property type="match status" value="1"/>
</dbReference>
<dbReference type="InterPro" id="IPR036188">
    <property type="entry name" value="FAD/NAD-bd_sf"/>
</dbReference>
<dbReference type="InterPro" id="IPR023753">
    <property type="entry name" value="FAD/NAD-binding_dom"/>
</dbReference>
<dbReference type="InterPro" id="IPR022890">
    <property type="entry name" value="Fd--NADP_Rdtase_type_2"/>
</dbReference>
<dbReference type="InterPro" id="IPR050097">
    <property type="entry name" value="Ferredoxin-NADP_redctase_2"/>
</dbReference>
<dbReference type="PANTHER" id="PTHR48105">
    <property type="entry name" value="THIOREDOXIN REDUCTASE 1-RELATED-RELATED"/>
    <property type="match status" value="1"/>
</dbReference>
<dbReference type="Pfam" id="PF07992">
    <property type="entry name" value="Pyr_redox_2"/>
    <property type="match status" value="1"/>
</dbReference>
<dbReference type="PRINTS" id="PR00368">
    <property type="entry name" value="FADPNR"/>
</dbReference>
<dbReference type="PRINTS" id="PR00469">
    <property type="entry name" value="PNDRDTASEII"/>
</dbReference>
<dbReference type="SUPFAM" id="SSF51905">
    <property type="entry name" value="FAD/NAD(P)-binding domain"/>
    <property type="match status" value="1"/>
</dbReference>
<feature type="chain" id="PRO_0000364947" description="Ferredoxin--NADP reductase">
    <location>
        <begin position="1"/>
        <end position="344"/>
    </location>
</feature>
<feature type="binding site" evidence="1">
    <location>
        <position position="12"/>
    </location>
    <ligand>
        <name>FAD</name>
        <dbReference type="ChEBI" id="CHEBI:57692"/>
    </ligand>
</feature>
<feature type="binding site" evidence="1">
    <location>
        <position position="31"/>
    </location>
    <ligand>
        <name>FAD</name>
        <dbReference type="ChEBI" id="CHEBI:57692"/>
    </ligand>
</feature>
<feature type="binding site" evidence="1">
    <location>
        <position position="39"/>
    </location>
    <ligand>
        <name>FAD</name>
        <dbReference type="ChEBI" id="CHEBI:57692"/>
    </ligand>
</feature>
<feature type="binding site" evidence="1">
    <location>
        <position position="43"/>
    </location>
    <ligand>
        <name>FAD</name>
        <dbReference type="ChEBI" id="CHEBI:57692"/>
    </ligand>
</feature>
<feature type="binding site" evidence="1">
    <location>
        <position position="83"/>
    </location>
    <ligand>
        <name>FAD</name>
        <dbReference type="ChEBI" id="CHEBI:57692"/>
    </ligand>
</feature>
<feature type="binding site" evidence="1">
    <location>
        <position position="118"/>
    </location>
    <ligand>
        <name>FAD</name>
        <dbReference type="ChEBI" id="CHEBI:57692"/>
    </ligand>
</feature>
<feature type="binding site" evidence="1">
    <location>
        <position position="285"/>
    </location>
    <ligand>
        <name>FAD</name>
        <dbReference type="ChEBI" id="CHEBI:57692"/>
    </ligand>
</feature>
<feature type="binding site" evidence="1">
    <location>
        <position position="326"/>
    </location>
    <ligand>
        <name>FAD</name>
        <dbReference type="ChEBI" id="CHEBI:57692"/>
    </ligand>
</feature>
<feature type="strand" evidence="2">
    <location>
        <begin position="2"/>
        <end position="7"/>
    </location>
</feature>
<feature type="helix" evidence="2">
    <location>
        <begin position="11"/>
        <end position="22"/>
    </location>
</feature>
<feature type="strand" evidence="2">
    <location>
        <begin position="27"/>
        <end position="30"/>
    </location>
</feature>
<feature type="strand" evidence="2">
    <location>
        <begin position="32"/>
        <end position="36"/>
    </location>
</feature>
<feature type="helix" evidence="2">
    <location>
        <begin position="38"/>
        <end position="42"/>
    </location>
</feature>
<feature type="strand" evidence="2">
    <location>
        <begin position="46"/>
        <end position="48"/>
    </location>
</feature>
<feature type="strand" evidence="2">
    <location>
        <begin position="56"/>
        <end position="58"/>
    </location>
</feature>
<feature type="helix" evidence="2">
    <location>
        <begin position="59"/>
        <end position="70"/>
    </location>
</feature>
<feature type="turn" evidence="2">
    <location>
        <begin position="71"/>
        <end position="73"/>
    </location>
</feature>
<feature type="strand" evidence="2">
    <location>
        <begin position="76"/>
        <end position="78"/>
    </location>
</feature>
<feature type="strand" evidence="2">
    <location>
        <begin position="83"/>
        <end position="90"/>
    </location>
</feature>
<feature type="strand" evidence="2">
    <location>
        <begin position="93"/>
        <end position="98"/>
    </location>
</feature>
<feature type="strand" evidence="2">
    <location>
        <begin position="103"/>
        <end position="111"/>
    </location>
</feature>
<feature type="strand" evidence="2">
    <location>
        <begin position="117"/>
        <end position="120"/>
    </location>
</feature>
<feature type="strand" evidence="3">
    <location>
        <begin position="125"/>
        <end position="128"/>
    </location>
</feature>
<feature type="helix" evidence="2">
    <location>
        <begin position="131"/>
        <end position="133"/>
    </location>
</feature>
<feature type="strand" evidence="2">
    <location>
        <begin position="136"/>
        <end position="138"/>
    </location>
</feature>
<feature type="helix" evidence="2">
    <location>
        <begin position="144"/>
        <end position="146"/>
    </location>
</feature>
<feature type="strand" evidence="2">
    <location>
        <begin position="150"/>
        <end position="154"/>
    </location>
</feature>
<feature type="helix" evidence="2">
    <location>
        <begin position="158"/>
        <end position="168"/>
    </location>
</feature>
<feature type="strand" evidence="2">
    <location>
        <begin position="171"/>
        <end position="178"/>
    </location>
</feature>
<feature type="helix" evidence="2">
    <location>
        <begin position="180"/>
        <end position="182"/>
    </location>
</feature>
<feature type="helix" evidence="2">
    <location>
        <begin position="186"/>
        <end position="194"/>
    </location>
</feature>
<feature type="strand" evidence="2">
    <location>
        <begin position="198"/>
        <end position="202"/>
    </location>
</feature>
<feature type="strand" evidence="2">
    <location>
        <begin position="204"/>
        <end position="211"/>
    </location>
</feature>
<feature type="strand" evidence="2">
    <location>
        <begin position="215"/>
        <end position="225"/>
    </location>
</feature>
<feature type="turn" evidence="2">
    <location>
        <begin position="226"/>
        <end position="228"/>
    </location>
</feature>
<feature type="strand" evidence="2">
    <location>
        <begin position="231"/>
        <end position="235"/>
    </location>
</feature>
<feature type="strand" evidence="2">
    <location>
        <begin position="237"/>
        <end position="241"/>
    </location>
</feature>
<feature type="strand" evidence="2">
    <location>
        <begin position="245"/>
        <end position="248"/>
    </location>
</feature>
<feature type="helix" evidence="2">
    <location>
        <begin position="251"/>
        <end position="254"/>
    </location>
</feature>
<feature type="strand" evidence="3">
    <location>
        <begin position="255"/>
        <end position="257"/>
    </location>
</feature>
<feature type="strand" evidence="2">
    <location>
        <begin position="261"/>
        <end position="265"/>
    </location>
</feature>
<feature type="strand" evidence="2">
    <location>
        <begin position="270"/>
        <end position="274"/>
    </location>
</feature>
<feature type="strand" evidence="2">
    <location>
        <begin position="280"/>
        <end position="282"/>
    </location>
</feature>
<feature type="helix" evidence="2">
    <location>
        <begin position="296"/>
        <end position="314"/>
    </location>
</feature>
<feature type="helix" evidence="2">
    <location>
        <begin position="325"/>
        <end position="327"/>
    </location>
</feature>
<feature type="helix" evidence="2">
    <location>
        <begin position="329"/>
        <end position="331"/>
    </location>
</feature>
<feature type="helix" evidence="2">
    <location>
        <begin position="332"/>
        <end position="342"/>
    </location>
</feature>
<name>FENR_STAA3</name>
<reference key="1">
    <citation type="journal article" date="2006" name="Lancet">
        <title>Complete genome sequence of USA300, an epidemic clone of community-acquired meticillin-resistant Staphylococcus aureus.</title>
        <authorList>
            <person name="Diep B.A."/>
            <person name="Gill S.R."/>
            <person name="Chang R.F."/>
            <person name="Phan T.H."/>
            <person name="Chen J.H."/>
            <person name="Davidson M.G."/>
            <person name="Lin F."/>
            <person name="Lin J."/>
            <person name="Carleton H.A."/>
            <person name="Mongodin E.F."/>
            <person name="Sensabaugh G.F."/>
            <person name="Perdreau-Remington F."/>
        </authorList>
    </citation>
    <scope>NUCLEOTIDE SEQUENCE [LARGE SCALE GENOMIC DNA]</scope>
    <source>
        <strain>USA300</strain>
    </source>
</reference>
<keyword id="KW-0002">3D-structure</keyword>
<keyword id="KW-0274">FAD</keyword>
<keyword id="KW-0285">Flavoprotein</keyword>
<keyword id="KW-0521">NADP</keyword>
<keyword id="KW-0560">Oxidoreductase</keyword>
<comment type="catalytic activity">
    <reaction evidence="1">
        <text>2 reduced [2Fe-2S]-[ferredoxin] + NADP(+) + H(+) = 2 oxidized [2Fe-2S]-[ferredoxin] + NADPH</text>
        <dbReference type="Rhea" id="RHEA:20125"/>
        <dbReference type="Rhea" id="RHEA-COMP:10000"/>
        <dbReference type="Rhea" id="RHEA-COMP:10001"/>
        <dbReference type="ChEBI" id="CHEBI:15378"/>
        <dbReference type="ChEBI" id="CHEBI:33737"/>
        <dbReference type="ChEBI" id="CHEBI:33738"/>
        <dbReference type="ChEBI" id="CHEBI:57783"/>
        <dbReference type="ChEBI" id="CHEBI:58349"/>
        <dbReference type="EC" id="1.18.1.2"/>
    </reaction>
</comment>
<comment type="cofactor">
    <cofactor evidence="1">
        <name>FAD</name>
        <dbReference type="ChEBI" id="CHEBI:57692"/>
    </cofactor>
    <text evidence="1">Binds 1 FAD per subunit.</text>
</comment>
<comment type="subunit">
    <text evidence="1">Homodimer.</text>
</comment>
<comment type="similarity">
    <text evidence="1">Belongs to the ferredoxin--NADP reductase type 2 family.</text>
</comment>
<sequence>MKDVTIIGGGPSGLYASFYAGLRDMSVRLIDVQSELGGKMRIYPEKIIWDIGGIAPKPCHEILKDTIKQGLYFKPEVHLNERVVDIRKKAERHFEVETEAGEIYTSKAVIIAIGAGIINPKQLDVKGVERYQLTNLHYVVQSYRRFKDKDVLISGGGNTALDWAHDIAKIAKSVTVVYRKEDVSGHEAMKTLVTDLNVKLCPKTRIKYLVGNDDETHISEVVLEHVESGDRHTVKFDDVIISHGFDRCNTLLSETSSKLDMHDDCRVKGFGNTTTSIPGIYACGDIVYHDAKSHLIASAFSDGANAANLAKTYIQPDANAEGYVSSHHEVFKEANKTIVNKHLY</sequence>
<organism>
    <name type="scientific">Staphylococcus aureus (strain USA300)</name>
    <dbReference type="NCBI Taxonomy" id="367830"/>
    <lineage>
        <taxon>Bacteria</taxon>
        <taxon>Bacillati</taxon>
        <taxon>Bacillota</taxon>
        <taxon>Bacilli</taxon>
        <taxon>Bacillales</taxon>
        <taxon>Staphylococcaceae</taxon>
        <taxon>Staphylococcus</taxon>
    </lineage>
</organism>
<evidence type="ECO:0000255" key="1">
    <source>
        <dbReference type="HAMAP-Rule" id="MF_01685"/>
    </source>
</evidence>
<evidence type="ECO:0007829" key="2">
    <source>
        <dbReference type="PDB" id="5TWB"/>
    </source>
</evidence>
<evidence type="ECO:0007829" key="3">
    <source>
        <dbReference type="PDB" id="5TWC"/>
    </source>
</evidence>
<protein>
    <recommendedName>
        <fullName evidence="1">Ferredoxin--NADP reductase</fullName>
        <shortName evidence="1">FNR</shortName>
        <shortName evidence="1">Fd-NADP(+) reductase</shortName>
        <ecNumber evidence="1">1.18.1.2</ecNumber>
    </recommendedName>
</protein>